<protein>
    <recommendedName>
        <fullName>Uncharacterized HTH-type transcriptional regulator in cgkA 5'region</fullName>
    </recommendedName>
</protein>
<name>YCGK_PSEVC</name>
<dbReference type="EMBL" id="X71620">
    <property type="status" value="NOT_ANNOTATED_CDS"/>
    <property type="molecule type" value="Genomic_DNA"/>
</dbReference>
<dbReference type="SMR" id="P43461"/>
<dbReference type="GO" id="GO:0003700">
    <property type="term" value="F:DNA-binding transcription factor activity"/>
    <property type="evidence" value="ECO:0007669"/>
    <property type="project" value="InterPro"/>
</dbReference>
<dbReference type="GO" id="GO:0043565">
    <property type="term" value="F:sequence-specific DNA binding"/>
    <property type="evidence" value="ECO:0007669"/>
    <property type="project" value="InterPro"/>
</dbReference>
<dbReference type="Gene3D" id="1.10.10.60">
    <property type="entry name" value="Homeodomain-like"/>
    <property type="match status" value="2"/>
</dbReference>
<dbReference type="InterPro" id="IPR009057">
    <property type="entry name" value="Homeodomain-like_sf"/>
</dbReference>
<dbReference type="InterPro" id="IPR018060">
    <property type="entry name" value="HTH_AraC"/>
</dbReference>
<dbReference type="InterPro" id="IPR018062">
    <property type="entry name" value="HTH_AraC-typ_CS"/>
</dbReference>
<dbReference type="InterPro" id="IPR020449">
    <property type="entry name" value="Tscrpt_reg_AraC-type_HTH"/>
</dbReference>
<dbReference type="PANTHER" id="PTHR43280">
    <property type="entry name" value="ARAC-FAMILY TRANSCRIPTIONAL REGULATOR"/>
    <property type="match status" value="1"/>
</dbReference>
<dbReference type="PANTHER" id="PTHR43280:SF28">
    <property type="entry name" value="HTH-TYPE TRANSCRIPTIONAL ACTIVATOR RHAS"/>
    <property type="match status" value="1"/>
</dbReference>
<dbReference type="Pfam" id="PF12833">
    <property type="entry name" value="HTH_18"/>
    <property type="match status" value="1"/>
</dbReference>
<dbReference type="PRINTS" id="PR00032">
    <property type="entry name" value="HTHARAC"/>
</dbReference>
<dbReference type="SMART" id="SM00342">
    <property type="entry name" value="HTH_ARAC"/>
    <property type="match status" value="1"/>
</dbReference>
<dbReference type="SUPFAM" id="SSF46689">
    <property type="entry name" value="Homeodomain-like"/>
    <property type="match status" value="2"/>
</dbReference>
<dbReference type="PROSITE" id="PS00041">
    <property type="entry name" value="HTH_ARAC_FAMILY_1"/>
    <property type="match status" value="1"/>
</dbReference>
<dbReference type="PROSITE" id="PS01124">
    <property type="entry name" value="HTH_ARAC_FAMILY_2"/>
    <property type="match status" value="1"/>
</dbReference>
<feature type="chain" id="PRO_0000194625" description="Uncharacterized HTH-type transcriptional regulator in cgkA 5'region">
    <location>
        <begin position="1" status="less than"/>
        <end position="166"/>
    </location>
</feature>
<feature type="domain" description="HTH araC/xylS-type" evidence="1">
    <location>
        <begin position="67"/>
        <end position="163"/>
    </location>
</feature>
<feature type="DNA-binding region" description="H-T-H motif" evidence="1">
    <location>
        <begin position="84"/>
        <end position="105"/>
    </location>
</feature>
<feature type="DNA-binding region" description="H-T-H motif" evidence="1">
    <location>
        <begin position="130"/>
        <end position="153"/>
    </location>
</feature>
<feature type="region of interest" description="Disordered" evidence="2">
    <location>
        <begin position="28"/>
        <end position="55"/>
    </location>
</feature>
<feature type="compositionally biased region" description="Basic and acidic residues" evidence="2">
    <location>
        <begin position="42"/>
        <end position="55"/>
    </location>
</feature>
<feature type="non-terminal residue">
    <location>
        <position position="1"/>
    </location>
</feature>
<sequence length="166" mass="19076">DHIIPLQIKNSQDSQIISFFKADKGSVSRQVHPPWPVPCKSKLQEQDSSESKESKAEQVKINNCVVQNAMLYIENNYFNDINIDTVAFSVGVSRSYLVKQFKLATNKTINNRIIEVRIEQAKKVLLKKSVTETAYEVGFNNSNYFATVFKKRTNYTPKQFKRTFSS</sequence>
<proteinExistence type="predicted"/>
<reference key="1">
    <citation type="journal article" date="1994" name="Gene">
        <title>The gene encoding the kappa-carrageenase of Alteromonas carrageenovora is related to beta-1,3-1,4-glucanases.</title>
        <authorList>
            <person name="Barbeyron T."/>
            <person name="Henrissat B."/>
            <person name="Kloareg B."/>
        </authorList>
    </citation>
    <scope>NUCLEOTIDE SEQUENCE [GENOMIC DNA]</scope>
    <source>
        <strain>ATCC 43555 / DSM 6820 / JCM 8851 / IAM 12662 / NBRC 12985 / NCIMB 302</strain>
    </source>
</reference>
<evidence type="ECO:0000255" key="1">
    <source>
        <dbReference type="PROSITE-ProRule" id="PRU00593"/>
    </source>
</evidence>
<evidence type="ECO:0000256" key="2">
    <source>
        <dbReference type="SAM" id="MobiDB-lite"/>
    </source>
</evidence>
<organism>
    <name type="scientific">Pseudoalteromonas carrageenovora</name>
    <name type="common">Alteromonas carrageenovora</name>
    <dbReference type="NCBI Taxonomy" id="227"/>
    <lineage>
        <taxon>Bacteria</taxon>
        <taxon>Pseudomonadati</taxon>
        <taxon>Pseudomonadota</taxon>
        <taxon>Gammaproteobacteria</taxon>
        <taxon>Alteromonadales</taxon>
        <taxon>Pseudoalteromonadaceae</taxon>
        <taxon>Pseudoalteromonas</taxon>
    </lineage>
</organism>
<keyword id="KW-0238">DNA-binding</keyword>
<keyword id="KW-0804">Transcription</keyword>
<keyword id="KW-0805">Transcription regulation</keyword>
<accession>P43461</accession>